<accession>Q1JFY9</accession>
<sequence>MTAQTPIHVYSEIGKLKKVLLHRPGKEIENLMPDYLERLLFDDIPFLEDAQKEHDAFAQALRDEGIEVLYLETLAAESLVTPEIREAFIDEYLSEANIRGRATKKAIRELLMAIEDNQELIEKTMAGVQKSELPEIPASEKGLTDLVESNYPFAIDPMPNLYFTRDPFATIGTGVSLNHMFSETRNRETLYGKYIFTHHPIYGGGKVPMVYDRNETTRIEGGDELVLSKDVLAVGISQRTDAASIEKLLVNIFKQNLGFKKVLAFEFANNRKFMHLDTVFTMVDYDKFTIHPEIEGDLRVYSVTYDNEELHIIEEKGDLAELLAANLGVEKVDLIRCGGDNLVAAGREQWNDGSNTLTIAPGVVVVYNRNTITNAILESKGLKLIKIHGSELVRGRGGPRCMSMPFEREDI</sequence>
<protein>
    <recommendedName>
        <fullName evidence="1">Arginine deiminase</fullName>
        <shortName evidence="1">ADI</shortName>
        <ecNumber evidence="1">3.5.3.6</ecNumber>
    </recommendedName>
    <alternativeName>
        <fullName evidence="1">Arginine dihydrolase</fullName>
        <shortName evidence="1">AD</shortName>
    </alternativeName>
</protein>
<feature type="chain" id="PRO_1000005727" description="Arginine deiminase">
    <location>
        <begin position="1"/>
        <end position="411"/>
    </location>
</feature>
<feature type="active site" description="Amidino-cysteine intermediate" evidence="1">
    <location>
        <position position="401"/>
    </location>
</feature>
<name>ARCA_STRPD</name>
<comment type="catalytic activity">
    <reaction evidence="1">
        <text>L-arginine + H2O = L-citrulline + NH4(+)</text>
        <dbReference type="Rhea" id="RHEA:19597"/>
        <dbReference type="ChEBI" id="CHEBI:15377"/>
        <dbReference type="ChEBI" id="CHEBI:28938"/>
        <dbReference type="ChEBI" id="CHEBI:32682"/>
        <dbReference type="ChEBI" id="CHEBI:57743"/>
        <dbReference type="EC" id="3.5.3.6"/>
    </reaction>
</comment>
<comment type="pathway">
    <text evidence="1">Amino-acid degradation; L-arginine degradation via ADI pathway; carbamoyl phosphate from L-arginine: step 1/2.</text>
</comment>
<comment type="subcellular location">
    <subcellularLocation>
        <location evidence="1">Cytoplasm</location>
    </subcellularLocation>
</comment>
<comment type="similarity">
    <text evidence="1">Belongs to the arginine deiminase family.</text>
</comment>
<evidence type="ECO:0000255" key="1">
    <source>
        <dbReference type="HAMAP-Rule" id="MF_00242"/>
    </source>
</evidence>
<dbReference type="EC" id="3.5.3.6" evidence="1"/>
<dbReference type="EMBL" id="CP000260">
    <property type="protein sequence ID" value="ABF34355.1"/>
    <property type="molecule type" value="Genomic_DNA"/>
</dbReference>
<dbReference type="SMR" id="Q1JFY9"/>
<dbReference type="KEGG" id="sph:MGAS10270_Spy1290"/>
<dbReference type="HOGENOM" id="CLU_052662_0_1_9"/>
<dbReference type="UniPathway" id="UPA00254">
    <property type="reaction ID" value="UER00364"/>
</dbReference>
<dbReference type="Proteomes" id="UP000002436">
    <property type="component" value="Chromosome"/>
</dbReference>
<dbReference type="GO" id="GO:0005737">
    <property type="term" value="C:cytoplasm"/>
    <property type="evidence" value="ECO:0007669"/>
    <property type="project" value="UniProtKB-SubCell"/>
</dbReference>
<dbReference type="GO" id="GO:0016990">
    <property type="term" value="F:arginine deiminase activity"/>
    <property type="evidence" value="ECO:0007669"/>
    <property type="project" value="UniProtKB-UniRule"/>
</dbReference>
<dbReference type="GO" id="GO:0019547">
    <property type="term" value="P:arginine catabolic process to ornithine"/>
    <property type="evidence" value="ECO:0007669"/>
    <property type="project" value="UniProtKB-UniRule"/>
</dbReference>
<dbReference type="GO" id="GO:0019546">
    <property type="term" value="P:arginine deiminase pathway"/>
    <property type="evidence" value="ECO:0007669"/>
    <property type="project" value="TreeGrafter"/>
</dbReference>
<dbReference type="Gene3D" id="1.10.3930.10">
    <property type="entry name" value="Arginine deiminase"/>
    <property type="match status" value="1"/>
</dbReference>
<dbReference type="Gene3D" id="3.75.10.10">
    <property type="entry name" value="L-arginine/glycine Amidinotransferase, Chain A"/>
    <property type="match status" value="1"/>
</dbReference>
<dbReference type="HAMAP" id="MF_00242">
    <property type="entry name" value="Arg_deiminase"/>
    <property type="match status" value="1"/>
</dbReference>
<dbReference type="InterPro" id="IPR003876">
    <property type="entry name" value="Arg_deiminase"/>
</dbReference>
<dbReference type="NCBIfam" id="TIGR01078">
    <property type="entry name" value="arcA"/>
    <property type="match status" value="1"/>
</dbReference>
<dbReference type="NCBIfam" id="NF002381">
    <property type="entry name" value="PRK01388.1"/>
    <property type="match status" value="1"/>
</dbReference>
<dbReference type="PANTHER" id="PTHR47271">
    <property type="entry name" value="ARGININE DEIMINASE"/>
    <property type="match status" value="1"/>
</dbReference>
<dbReference type="PANTHER" id="PTHR47271:SF2">
    <property type="entry name" value="ARGININE DEIMINASE"/>
    <property type="match status" value="1"/>
</dbReference>
<dbReference type="Pfam" id="PF02274">
    <property type="entry name" value="ADI"/>
    <property type="match status" value="1"/>
</dbReference>
<dbReference type="PIRSF" id="PIRSF006356">
    <property type="entry name" value="Arg_deiminase"/>
    <property type="match status" value="1"/>
</dbReference>
<dbReference type="PRINTS" id="PR01466">
    <property type="entry name" value="ARGDEIMINASE"/>
</dbReference>
<dbReference type="SUPFAM" id="SSF55909">
    <property type="entry name" value="Pentein"/>
    <property type="match status" value="1"/>
</dbReference>
<keyword id="KW-0056">Arginine metabolism</keyword>
<keyword id="KW-0963">Cytoplasm</keyword>
<keyword id="KW-0378">Hydrolase</keyword>
<organism>
    <name type="scientific">Streptococcus pyogenes serotype M2 (strain MGAS10270)</name>
    <dbReference type="NCBI Taxonomy" id="370552"/>
    <lineage>
        <taxon>Bacteria</taxon>
        <taxon>Bacillati</taxon>
        <taxon>Bacillota</taxon>
        <taxon>Bacilli</taxon>
        <taxon>Lactobacillales</taxon>
        <taxon>Streptococcaceae</taxon>
        <taxon>Streptococcus</taxon>
    </lineage>
</organism>
<reference key="1">
    <citation type="journal article" date="2006" name="Proc. Natl. Acad. Sci. U.S.A.">
        <title>Molecular genetic anatomy of inter- and intraserotype variation in the human bacterial pathogen group A Streptococcus.</title>
        <authorList>
            <person name="Beres S.B."/>
            <person name="Richter E.W."/>
            <person name="Nagiec M.J."/>
            <person name="Sumby P."/>
            <person name="Porcella S.F."/>
            <person name="DeLeo F.R."/>
            <person name="Musser J.M."/>
        </authorList>
    </citation>
    <scope>NUCLEOTIDE SEQUENCE [LARGE SCALE GENOMIC DNA]</scope>
    <source>
        <strain>MGAS10270</strain>
    </source>
</reference>
<gene>
    <name evidence="1" type="primary">arcA</name>
    <name type="ordered locus">MGAS10270_Spy1290</name>
</gene>
<proteinExistence type="inferred from homology"/>